<sequence>MPWIQLKIDTDNQHADTLSDLLMEEGSLSITLEDGKDTPIFEPTLGETPLWNHTVLTALFEADRDLSIVVDNLKLQPFLGADFSYKIEQVEDKDWEREWMDNFHPIKFGERLWICPSWREIPDPEAVNIILDPGLAFGTGTHPTTALCLEWLDSLNFDNKEVIDFGCGSGILAVAALKLGATKVTGIDIDYQAIDASKANAERNGVEDQLTLYLPEDQPENLKADILVANILAGPLRELAPLIAEKVKPGGQLALSGLLQEQALEVAEFYTQWFDMDEPAHKEEWSRLTGIRK</sequence>
<protein>
    <recommendedName>
        <fullName evidence="1">Ribosomal protein L11 methyltransferase</fullName>
        <shortName evidence="1">L11 Mtase</shortName>
        <ecNumber evidence="1">2.1.1.-</ecNumber>
    </recommendedName>
</protein>
<comment type="function">
    <text evidence="1">Methylates ribosomal protein L11.</text>
</comment>
<comment type="catalytic activity">
    <reaction evidence="1">
        <text>L-lysyl-[protein] + 3 S-adenosyl-L-methionine = N(6),N(6),N(6)-trimethyl-L-lysyl-[protein] + 3 S-adenosyl-L-homocysteine + 3 H(+)</text>
        <dbReference type="Rhea" id="RHEA:54192"/>
        <dbReference type="Rhea" id="RHEA-COMP:9752"/>
        <dbReference type="Rhea" id="RHEA-COMP:13826"/>
        <dbReference type="ChEBI" id="CHEBI:15378"/>
        <dbReference type="ChEBI" id="CHEBI:29969"/>
        <dbReference type="ChEBI" id="CHEBI:57856"/>
        <dbReference type="ChEBI" id="CHEBI:59789"/>
        <dbReference type="ChEBI" id="CHEBI:61961"/>
    </reaction>
</comment>
<comment type="subcellular location">
    <subcellularLocation>
        <location evidence="1">Cytoplasm</location>
    </subcellularLocation>
</comment>
<comment type="similarity">
    <text evidence="1">Belongs to the methyltransferase superfamily. PrmA family.</text>
</comment>
<proteinExistence type="inferred from homology"/>
<evidence type="ECO:0000255" key="1">
    <source>
        <dbReference type="HAMAP-Rule" id="MF_00735"/>
    </source>
</evidence>
<organism>
    <name type="scientific">Shewanella woodyi (strain ATCC 51908 / MS32)</name>
    <dbReference type="NCBI Taxonomy" id="392500"/>
    <lineage>
        <taxon>Bacteria</taxon>
        <taxon>Pseudomonadati</taxon>
        <taxon>Pseudomonadota</taxon>
        <taxon>Gammaproteobacteria</taxon>
        <taxon>Alteromonadales</taxon>
        <taxon>Shewanellaceae</taxon>
        <taxon>Shewanella</taxon>
    </lineage>
</organism>
<accession>B1KQE8</accession>
<keyword id="KW-0963">Cytoplasm</keyword>
<keyword id="KW-0489">Methyltransferase</keyword>
<keyword id="KW-1185">Reference proteome</keyword>
<keyword id="KW-0949">S-adenosyl-L-methionine</keyword>
<keyword id="KW-0808">Transferase</keyword>
<dbReference type="EC" id="2.1.1.-" evidence="1"/>
<dbReference type="EMBL" id="CP000961">
    <property type="protein sequence ID" value="ACA84803.1"/>
    <property type="molecule type" value="Genomic_DNA"/>
</dbReference>
<dbReference type="RefSeq" id="WP_012323151.1">
    <property type="nucleotide sequence ID" value="NC_010506.1"/>
</dbReference>
<dbReference type="SMR" id="B1KQE8"/>
<dbReference type="STRING" id="392500.Swoo_0506"/>
<dbReference type="KEGG" id="swd:Swoo_0506"/>
<dbReference type="eggNOG" id="COG2264">
    <property type="taxonomic scope" value="Bacteria"/>
</dbReference>
<dbReference type="HOGENOM" id="CLU_049382_4_1_6"/>
<dbReference type="Proteomes" id="UP000002168">
    <property type="component" value="Chromosome"/>
</dbReference>
<dbReference type="GO" id="GO:0005829">
    <property type="term" value="C:cytosol"/>
    <property type="evidence" value="ECO:0007669"/>
    <property type="project" value="TreeGrafter"/>
</dbReference>
<dbReference type="GO" id="GO:0016279">
    <property type="term" value="F:protein-lysine N-methyltransferase activity"/>
    <property type="evidence" value="ECO:0007669"/>
    <property type="project" value="TreeGrafter"/>
</dbReference>
<dbReference type="GO" id="GO:0032259">
    <property type="term" value="P:methylation"/>
    <property type="evidence" value="ECO:0007669"/>
    <property type="project" value="UniProtKB-KW"/>
</dbReference>
<dbReference type="CDD" id="cd02440">
    <property type="entry name" value="AdoMet_MTases"/>
    <property type="match status" value="1"/>
</dbReference>
<dbReference type="Gene3D" id="3.40.50.150">
    <property type="entry name" value="Vaccinia Virus protein VP39"/>
    <property type="match status" value="1"/>
</dbReference>
<dbReference type="HAMAP" id="MF_00735">
    <property type="entry name" value="Methyltr_PrmA"/>
    <property type="match status" value="1"/>
</dbReference>
<dbReference type="InterPro" id="IPR050078">
    <property type="entry name" value="Ribosomal_L11_MeTrfase_PrmA"/>
</dbReference>
<dbReference type="InterPro" id="IPR004498">
    <property type="entry name" value="Ribosomal_PrmA_MeTrfase"/>
</dbReference>
<dbReference type="InterPro" id="IPR029063">
    <property type="entry name" value="SAM-dependent_MTases_sf"/>
</dbReference>
<dbReference type="NCBIfam" id="TIGR00406">
    <property type="entry name" value="prmA"/>
    <property type="match status" value="1"/>
</dbReference>
<dbReference type="PANTHER" id="PTHR43648">
    <property type="entry name" value="ELECTRON TRANSFER FLAVOPROTEIN BETA SUBUNIT LYSINE METHYLTRANSFERASE"/>
    <property type="match status" value="1"/>
</dbReference>
<dbReference type="PANTHER" id="PTHR43648:SF1">
    <property type="entry name" value="ELECTRON TRANSFER FLAVOPROTEIN BETA SUBUNIT LYSINE METHYLTRANSFERASE"/>
    <property type="match status" value="1"/>
</dbReference>
<dbReference type="Pfam" id="PF06325">
    <property type="entry name" value="PrmA"/>
    <property type="match status" value="1"/>
</dbReference>
<dbReference type="PIRSF" id="PIRSF000401">
    <property type="entry name" value="RPL11_MTase"/>
    <property type="match status" value="1"/>
</dbReference>
<dbReference type="SUPFAM" id="SSF53335">
    <property type="entry name" value="S-adenosyl-L-methionine-dependent methyltransferases"/>
    <property type="match status" value="1"/>
</dbReference>
<name>PRMA_SHEWM</name>
<reference key="1">
    <citation type="submission" date="2008-02" db="EMBL/GenBank/DDBJ databases">
        <title>Complete sequence of Shewanella woodyi ATCC 51908.</title>
        <authorList>
            <consortium name="US DOE Joint Genome Institute"/>
            <person name="Copeland A."/>
            <person name="Lucas S."/>
            <person name="Lapidus A."/>
            <person name="Glavina del Rio T."/>
            <person name="Dalin E."/>
            <person name="Tice H."/>
            <person name="Bruce D."/>
            <person name="Goodwin L."/>
            <person name="Pitluck S."/>
            <person name="Sims D."/>
            <person name="Brettin T."/>
            <person name="Detter J.C."/>
            <person name="Han C."/>
            <person name="Kuske C.R."/>
            <person name="Schmutz J."/>
            <person name="Larimer F."/>
            <person name="Land M."/>
            <person name="Hauser L."/>
            <person name="Kyrpides N."/>
            <person name="Lykidis A."/>
            <person name="Zhao J.-S."/>
            <person name="Richardson P."/>
        </authorList>
    </citation>
    <scope>NUCLEOTIDE SEQUENCE [LARGE SCALE GENOMIC DNA]</scope>
    <source>
        <strain>ATCC 51908 / MS32</strain>
    </source>
</reference>
<gene>
    <name evidence="1" type="primary">prmA</name>
    <name type="ordered locus">Swoo_0506</name>
</gene>
<feature type="chain" id="PRO_1000132827" description="Ribosomal protein L11 methyltransferase">
    <location>
        <begin position="1"/>
        <end position="293"/>
    </location>
</feature>
<feature type="binding site" evidence="1">
    <location>
        <position position="145"/>
    </location>
    <ligand>
        <name>S-adenosyl-L-methionine</name>
        <dbReference type="ChEBI" id="CHEBI:59789"/>
    </ligand>
</feature>
<feature type="binding site" evidence="1">
    <location>
        <position position="166"/>
    </location>
    <ligand>
        <name>S-adenosyl-L-methionine</name>
        <dbReference type="ChEBI" id="CHEBI:59789"/>
    </ligand>
</feature>
<feature type="binding site" evidence="1">
    <location>
        <position position="188"/>
    </location>
    <ligand>
        <name>S-adenosyl-L-methionine</name>
        <dbReference type="ChEBI" id="CHEBI:59789"/>
    </ligand>
</feature>
<feature type="binding site" evidence="1">
    <location>
        <position position="230"/>
    </location>
    <ligand>
        <name>S-adenosyl-L-methionine</name>
        <dbReference type="ChEBI" id="CHEBI:59789"/>
    </ligand>
</feature>